<evidence type="ECO:0000250" key="1">
    <source>
        <dbReference type="UniProtKB" id="E2JF22"/>
    </source>
</evidence>
<evidence type="ECO:0000250" key="2">
    <source>
        <dbReference type="UniProtKB" id="Q0KL00"/>
    </source>
</evidence>
<evidence type="ECO:0000250" key="3">
    <source>
        <dbReference type="UniProtKB" id="Q91X60"/>
    </source>
</evidence>
<evidence type="ECO:0000255" key="4"/>
<evidence type="ECO:0000256" key="5">
    <source>
        <dbReference type="SAM" id="MobiDB-lite"/>
    </source>
</evidence>
<evidence type="ECO:0000269" key="6">
    <source>
    </source>
</evidence>
<evidence type="ECO:0000269" key="7">
    <source>
    </source>
</evidence>
<evidence type="ECO:0000269" key="8">
    <source>
    </source>
</evidence>
<evidence type="ECO:0000269" key="9">
    <source>
    </source>
</evidence>
<evidence type="ECO:0000269" key="10">
    <source>
    </source>
</evidence>
<evidence type="ECO:0000269" key="11">
    <source>
    </source>
</evidence>
<evidence type="ECO:0000269" key="12">
    <source>
    </source>
</evidence>
<evidence type="ECO:0000269" key="13">
    <source>
    </source>
</evidence>
<evidence type="ECO:0000269" key="14">
    <source>
    </source>
</evidence>
<evidence type="ECO:0000269" key="15">
    <source>
    </source>
</evidence>
<evidence type="ECO:0000269" key="16">
    <source>
    </source>
</evidence>
<evidence type="ECO:0000269" key="17">
    <source>
    </source>
</evidence>
<evidence type="ECO:0000269" key="18">
    <source>
    </source>
</evidence>
<evidence type="ECO:0000269" key="19">
    <source>
    </source>
</evidence>
<evidence type="ECO:0000269" key="20">
    <source>
    </source>
</evidence>
<evidence type="ECO:0000269" key="21">
    <source>
    </source>
</evidence>
<evidence type="ECO:0000305" key="22"/>
<evidence type="ECO:0000312" key="23">
    <source>
        <dbReference type="HGNC" id="HGNC:28993"/>
    </source>
</evidence>
<evidence type="ECO:0007744" key="24">
    <source>
    </source>
</evidence>
<evidence type="ECO:0007744" key="25">
    <source>
    </source>
</evidence>
<evidence type="ECO:0007744" key="26">
    <source>
    </source>
</evidence>
<evidence type="ECO:0007744" key="27">
    <source>
    </source>
</evidence>
<evidence type="ECO:0007744" key="28">
    <source>
    </source>
</evidence>
<feature type="chain" id="PRO_0000186817" description="Piezo-type mechanosensitive ion channel component 1">
    <location>
        <begin position="1"/>
        <end position="2521"/>
    </location>
</feature>
<feature type="topological domain" description="Cytoplasmic">
    <location>
        <begin position="1"/>
        <end position="12"/>
    </location>
</feature>
<feature type="transmembrane region" description="Helical; Name=1">
    <location>
        <begin position="13"/>
        <end position="25"/>
    </location>
</feature>
<feature type="topological domain" description="Extracellular">
    <location>
        <begin position="26"/>
        <end position="28"/>
    </location>
</feature>
<feature type="transmembrane region" description="Helical; Name=2">
    <location>
        <begin position="29"/>
        <end position="44"/>
    </location>
</feature>
<feature type="topological domain" description="Cytoplasmic">
    <location>
        <begin position="45"/>
        <end position="58"/>
    </location>
</feature>
<feature type="transmembrane region" description="Helical; Name=3">
    <location>
        <begin position="59"/>
        <end position="81"/>
    </location>
</feature>
<feature type="topological domain" description="Extracellular">
    <location>
        <begin position="82"/>
        <end position="121"/>
    </location>
</feature>
<feature type="transmembrane region" description="Helical; Name=4">
    <location>
        <begin position="122"/>
        <end position="138"/>
    </location>
</feature>
<feature type="topological domain" description="Cytoplasmic">
    <location>
        <begin position="139"/>
        <end position="194"/>
    </location>
</feature>
<feature type="transmembrane region" description="Helical; Name=5">
    <location>
        <begin position="195"/>
        <end position="214"/>
    </location>
</feature>
<feature type="topological domain" description="Extracellular">
    <location>
        <begin position="215"/>
        <end position="216"/>
    </location>
</feature>
<feature type="transmembrane region" description="Helical; Name=6">
    <location>
        <begin position="217"/>
        <end position="236"/>
    </location>
</feature>
<feature type="topological domain" description="Cytoplasmic">
    <location>
        <begin position="237"/>
        <end position="247"/>
    </location>
</feature>
<feature type="transmembrane region" description="Helical; Name=7">
    <location>
        <begin position="248"/>
        <end position="268"/>
    </location>
</feature>
<feature type="topological domain" description="Extracellular">
    <location>
        <begin position="269"/>
        <end position="309"/>
    </location>
</feature>
<feature type="transmembrane region" description="Helical; Name=8">
    <location>
        <begin position="310"/>
        <end position="330"/>
    </location>
</feature>
<feature type="topological domain" description="Cytoplasmic">
    <location>
        <begin position="331"/>
        <end position="417"/>
    </location>
</feature>
<feature type="transmembrane region" description="Helical; Name=9">
    <location>
        <begin position="418"/>
        <end position="438"/>
    </location>
</feature>
<feature type="topological domain" description="Extracellular">
    <location>
        <begin position="439"/>
        <end position="440"/>
    </location>
</feature>
<feature type="transmembrane region" description="Helical; Name=10">
    <location>
        <begin position="441"/>
        <end position="456"/>
    </location>
</feature>
<feature type="topological domain" description="Cytoplasmic">
    <location>
        <begin position="457"/>
        <end position="461"/>
    </location>
</feature>
<feature type="transmembrane region" description="Helical; Name=11">
    <location>
        <begin position="462"/>
        <end position="484"/>
    </location>
</feature>
<feature type="topological domain" description="Extracellular">
    <location>
        <begin position="485"/>
        <end position="512"/>
    </location>
</feature>
<feature type="transmembrane region" description="Helical; Name=12">
    <location>
        <begin position="513"/>
        <end position="530"/>
    </location>
</feature>
<feature type="topological domain" description="Cytoplasmic">
    <location>
        <begin position="531"/>
        <end position="574"/>
    </location>
</feature>
<feature type="transmembrane region" description="Helical; Name=13">
    <location>
        <begin position="575"/>
        <end position="595"/>
    </location>
</feature>
<feature type="topological domain" description="Extracellular">
    <location>
        <position position="596"/>
    </location>
</feature>
<feature type="transmembrane region" description="Helical; Name=14">
    <location>
        <begin position="597"/>
        <end position="617"/>
    </location>
</feature>
<feature type="topological domain" description="Cytoplasmic">
    <location>
        <begin position="618"/>
        <end position="627"/>
    </location>
</feature>
<feature type="transmembrane region" description="Helical; Name=15">
    <location>
        <begin position="628"/>
        <end position="649"/>
    </location>
</feature>
<feature type="topological domain" description="Extracellular">
    <location>
        <begin position="650"/>
        <end position="679"/>
    </location>
</feature>
<feature type="transmembrane region" description="Helical; Name=16">
    <location>
        <begin position="680"/>
        <end position="696"/>
    </location>
</feature>
<feature type="topological domain" description="Cytoplasmic" evidence="1">
    <location>
        <begin position="697"/>
        <end position="816"/>
    </location>
</feature>
<feature type="transmembrane region" description="Helical; Name=17" evidence="1">
    <location>
        <begin position="817"/>
        <end position="828"/>
    </location>
</feature>
<feature type="topological domain" description="Extracellular" evidence="1">
    <location>
        <begin position="829"/>
        <end position="831"/>
    </location>
</feature>
<feature type="transmembrane region" description="Helical; Name=18" evidence="1">
    <location>
        <begin position="832"/>
        <end position="845"/>
    </location>
</feature>
<feature type="topological domain" description="Cytoplasmic" evidence="1">
    <location>
        <begin position="846"/>
        <end position="859"/>
    </location>
</feature>
<feature type="transmembrane region" description="Helical; Name=19" evidence="1">
    <location>
        <begin position="860"/>
        <end position="874"/>
    </location>
</feature>
<feature type="topological domain" description="Extracellular" evidence="1">
    <location>
        <begin position="875"/>
        <end position="926"/>
    </location>
</feature>
<feature type="transmembrane region" description="Helical; Name=20" evidence="1">
    <location>
        <begin position="927"/>
        <end position="954"/>
    </location>
</feature>
<feature type="topological domain" description="Cytoplasmic" evidence="1">
    <location>
        <begin position="955"/>
        <end position="994"/>
    </location>
</feature>
<feature type="transmembrane region" description="Helical; Name=21" evidence="1">
    <location>
        <begin position="995"/>
        <end position="1010"/>
    </location>
</feature>
<feature type="topological domain" description="Extracellular" evidence="1">
    <location>
        <begin position="1011"/>
        <end position="1012"/>
    </location>
</feature>
<feature type="transmembrane region" description="Helical; Name=22" evidence="1">
    <location>
        <begin position="1013"/>
        <end position="1028"/>
    </location>
</feature>
<feature type="topological domain" description="Cytoplasmic" evidence="1">
    <location>
        <begin position="1029"/>
        <end position="1041"/>
    </location>
</feature>
<feature type="transmembrane region" description="Helical; Name=23" evidence="1">
    <location>
        <begin position="1042"/>
        <end position="1057"/>
    </location>
</feature>
<feature type="topological domain" description="Extracellular" evidence="1">
    <location>
        <begin position="1058"/>
        <end position="1096"/>
    </location>
</feature>
<feature type="transmembrane region" description="Helical; Name=24" evidence="1">
    <location>
        <begin position="1097"/>
        <end position="1118"/>
    </location>
</feature>
<feature type="topological domain" description="Cytoplasmic" evidence="1">
    <location>
        <begin position="1119"/>
        <end position="1153"/>
    </location>
</feature>
<feature type="transmembrane region" description="Helical; Name=25" evidence="1">
    <location>
        <begin position="1154"/>
        <end position="1180"/>
    </location>
</feature>
<feature type="topological domain" description="Extracellular" evidence="1">
    <location>
        <begin position="1181"/>
        <end position="1185"/>
    </location>
</feature>
<feature type="transmembrane region" description="Helical; Name=26" evidence="1">
    <location>
        <begin position="1186"/>
        <end position="1204"/>
    </location>
</feature>
<feature type="topological domain" description="Cytoplasmic" evidence="1">
    <location>
        <begin position="1205"/>
        <end position="1217"/>
    </location>
</feature>
<feature type="transmembrane region" description="Helical; Name=27" evidence="1">
    <location>
        <begin position="1218"/>
        <end position="1236"/>
    </location>
</feature>
<feature type="topological domain" description="Extracellular" evidence="1">
    <location>
        <begin position="1237"/>
        <end position="1285"/>
    </location>
</feature>
<feature type="transmembrane region" description="Helical; Name=28" evidence="1">
    <location>
        <begin position="1286"/>
        <end position="1302"/>
    </location>
</feature>
<feature type="topological domain" description="Cytoplasmic" evidence="1">
    <location>
        <begin position="1303"/>
        <end position="1656"/>
    </location>
</feature>
<feature type="transmembrane region" description="Helical; Name=29" evidence="1">
    <location>
        <begin position="1657"/>
        <end position="1700"/>
    </location>
</feature>
<feature type="topological domain" description="Extracellular" evidence="1">
    <location>
        <begin position="1701"/>
        <end position="1704"/>
    </location>
</feature>
<feature type="transmembrane region" description="Helical; Name=30" evidence="1">
    <location>
        <begin position="1705"/>
        <end position="1720"/>
    </location>
</feature>
<feature type="topological domain" description="Cytoplasmic" evidence="1">
    <location>
        <begin position="1721"/>
        <end position="1728"/>
    </location>
</feature>
<feature type="transmembrane region" description="Helical; Name=31" evidence="1">
    <location>
        <begin position="1729"/>
        <end position="1747"/>
    </location>
</feature>
<feature type="topological domain" description="Extracellular" evidence="1">
    <location>
        <begin position="1748"/>
        <end position="1779"/>
    </location>
</feature>
<feature type="transmembrane region" description="Helical; Name=32" evidence="1">
    <location>
        <begin position="1780"/>
        <end position="1801"/>
    </location>
</feature>
<feature type="topological domain" description="Cytoplasmic" evidence="1">
    <location>
        <begin position="1802"/>
        <end position="1960"/>
    </location>
</feature>
<feature type="transmembrane region" description="Helical; Name=33" evidence="1">
    <location>
        <begin position="1961"/>
        <end position="1980"/>
    </location>
</feature>
<feature type="topological domain" description="Extracellular" evidence="1">
    <location>
        <begin position="1981"/>
        <end position="2000"/>
    </location>
</feature>
<feature type="transmembrane region" description="Helical; Name=34" evidence="1">
    <location>
        <begin position="2001"/>
        <end position="2017"/>
    </location>
</feature>
<feature type="topological domain" description="Cytoplasmic" evidence="1">
    <location>
        <begin position="2018"/>
        <end position="2031"/>
    </location>
</feature>
<feature type="transmembrane region" description="Helical; Name=35" evidence="1">
    <location>
        <begin position="2032"/>
        <end position="2052"/>
    </location>
</feature>
<feature type="topological domain" description="Extracellular" evidence="1">
    <location>
        <begin position="2053"/>
        <end position="2060"/>
    </location>
</feature>
<feature type="transmembrane region" description="Helical; Name=36" evidence="1">
    <location>
        <begin position="2061"/>
        <end position="2076"/>
    </location>
</feature>
<feature type="topological domain" description="Cytoplasmic" evidence="1">
    <location>
        <begin position="2077"/>
        <end position="2176"/>
    </location>
</feature>
<feature type="transmembrane region" description="Helical; Name=37" evidence="1">
    <location>
        <begin position="2177"/>
        <end position="2197"/>
    </location>
</feature>
<feature type="topological domain" description="Extracellular" evidence="1">
    <location>
        <begin position="2198"/>
        <end position="2431"/>
    </location>
</feature>
<feature type="transmembrane region" description="Helical; Name=38" evidence="1">
    <location>
        <begin position="2432"/>
        <end position="2452"/>
    </location>
</feature>
<feature type="topological domain" description="Cytoplasmic" evidence="1">
    <location>
        <begin position="2453"/>
        <end position="2521"/>
    </location>
</feature>
<feature type="region of interest" description="Disordered" evidence="5">
    <location>
        <begin position="738"/>
        <end position="769"/>
    </location>
</feature>
<feature type="region of interest" description="Disordered" evidence="5">
    <location>
        <begin position="1356"/>
        <end position="1402"/>
    </location>
</feature>
<feature type="region of interest" description="Disordered" evidence="5">
    <location>
        <begin position="1462"/>
        <end position="1498"/>
    </location>
</feature>
<feature type="region of interest" description="Disordered" evidence="5">
    <location>
        <begin position="1576"/>
        <end position="1630"/>
    </location>
</feature>
<feature type="region of interest" description="Disordered" evidence="5">
    <location>
        <begin position="1811"/>
        <end position="1921"/>
    </location>
</feature>
<feature type="coiled-coil region" evidence="4">
    <location>
        <begin position="1339"/>
        <end position="1368"/>
    </location>
</feature>
<feature type="compositionally biased region" description="Acidic residues" evidence="5">
    <location>
        <begin position="749"/>
        <end position="759"/>
    </location>
</feature>
<feature type="compositionally biased region" description="Low complexity" evidence="5">
    <location>
        <begin position="1385"/>
        <end position="1398"/>
    </location>
</feature>
<feature type="compositionally biased region" description="Basic and acidic residues" evidence="5">
    <location>
        <begin position="1811"/>
        <end position="1822"/>
    </location>
</feature>
<feature type="compositionally biased region" description="Basic and acidic residues" evidence="5">
    <location>
        <begin position="1859"/>
        <end position="1868"/>
    </location>
</feature>
<feature type="compositionally biased region" description="Basic residues" evidence="5">
    <location>
        <begin position="1869"/>
        <end position="1878"/>
    </location>
</feature>
<feature type="compositionally biased region" description="Acidic residues" evidence="5">
    <location>
        <begin position="1890"/>
        <end position="1903"/>
    </location>
</feature>
<feature type="compositionally biased region" description="Basic and acidic residues" evidence="5">
    <location>
        <begin position="1904"/>
        <end position="1913"/>
    </location>
</feature>
<feature type="modified residue" description="Phosphothreonine" evidence="27">
    <location>
        <position position="734"/>
    </location>
</feature>
<feature type="modified residue" description="Phosphoserine" evidence="27">
    <location>
        <position position="758"/>
    </location>
</feature>
<feature type="modified residue" description="Phosphoserine" evidence="24 26 27">
    <location>
        <position position="1391"/>
    </location>
</feature>
<feature type="modified residue" description="Phosphoserine" evidence="27">
    <location>
        <position position="1396"/>
    </location>
</feature>
<feature type="modified residue" description="Phosphoserine" evidence="27">
    <location>
        <position position="1636"/>
    </location>
</feature>
<feature type="modified residue" description="Phosphoserine" evidence="24 25 26 27 28">
    <location>
        <position position="1646"/>
    </location>
</feature>
<feature type="modified residue" description="Phosphothreonine" evidence="24 27">
    <location>
        <position position="1854"/>
    </location>
</feature>
<feature type="glycosylation site" description="N-linked (GlcNAc...) asparagine" evidence="4">
    <location>
        <position position="295"/>
    </location>
</feature>
<feature type="glycosylation site" description="N-linked (GlcNAc...) asparagine" evidence="7">
    <location>
        <position position="2294"/>
    </location>
</feature>
<feature type="disulfide bond" evidence="1">
    <location>
        <begin position="2411"/>
        <end position="2415"/>
    </location>
</feature>
<feature type="sequence variant" id="VAR_089217" description="Found in a patient with prune belly syndrome; uncertain significance; dbSNP:rs142027562." evidence="21">
    <original>G</original>
    <variation>R</variation>
    <location>
        <position position="253"/>
    </location>
</feature>
<feature type="sequence variant" id="VAR_069822" description="In DHS1; dbSNP:rs755885744." evidence="10">
    <original>G</original>
    <variation>S</variation>
    <location>
        <position position="718"/>
    </location>
</feature>
<feature type="sequence variant" id="VAR_069823" description="In DHS1; dbSNP:rs200970763." evidence="10">
    <original>G</original>
    <variation>S</variation>
    <location>
        <position position="782"/>
    </location>
</feature>
<feature type="sequence variant" id="VAR_069824" description="In DHS1; dbSNP:rs202103485." evidence="10">
    <original>R</original>
    <variation>Q</variation>
    <location>
        <position position="808"/>
    </location>
</feature>
<feature type="sequence variant" id="VAR_076407" description="In LMPHM6; uncertain significance; dbSNP:rs201226914." evidence="17">
    <original>L</original>
    <variation>M</variation>
    <location>
        <position position="939"/>
    </location>
</feature>
<feature type="sequence variant" id="VAR_069825" description="In DHS1; dbSNP:rs587777765." evidence="10">
    <original>S</original>
    <variation>L</variation>
    <location>
        <position position="1117"/>
    </location>
</feature>
<feature type="sequence variant" id="VAR_069826" description="In DHS1; gives rise to mechanically activated currents that inactivate more slowly than wild-type currents; dbSNP:rs587776990." evidence="13">
    <original>R</original>
    <variation>P</variation>
    <location>
        <position position="1358"/>
    </location>
</feature>
<feature type="sequence variant" id="VAR_088145" description="Found in Er(a-b-) blood group phenotype; dbSNP:rs72811487." evidence="19">
    <location>
        <begin position="1763"/>
        <end position="2521"/>
    </location>
</feature>
<feature type="sequence variant" id="VAR_069827" description="In DHS1." evidence="10">
    <original>A</original>
    <variation>D</variation>
    <location>
        <position position="2003"/>
    </location>
</feature>
<feature type="sequence variant" id="VAR_069828" description="In DHS1; gives rise to mechanically activated currents that inactivate more slowly than wild-type currents; dbSNP:rs587776989." evidence="13">
    <original>A</original>
    <variation>T</variation>
    <location>
        <position position="2020"/>
    </location>
</feature>
<feature type="sequence variant" id="VAR_069829" description="In DHS1; dbSNP:rs587777764." evidence="10">
    <original>A</original>
    <variation>V</variation>
    <location>
        <position position="2020"/>
    </location>
</feature>
<feature type="sequence variant" id="VAR_069830" description="In DHS1; gives rise to mechanically activated currents that inactivate more slowly than wild-type currents; dbSNP:rs587776991." evidence="10 13">
    <original>T</original>
    <variation>M</variation>
    <location>
        <position position="2127"/>
    </location>
</feature>
<feature type="sequence variant" id="VAR_069831" description="In DHS1." evidence="10">
    <location>
        <begin position="2166"/>
        <end position="2169"/>
    </location>
</feature>
<feature type="sequence variant" id="VAR_089218" description="Found in a patient with prune belly syndrome; uncertain significance; the orthologous mouse mutation affects channel gating properties without affecting channel conductance; dbSNP:rs766429217." evidence="21">
    <original>S</original>
    <variation>L</variation>
    <location>
        <position position="2195"/>
    </location>
</feature>
<feature type="sequence variant" id="VAR_069832" description="In DHS1; gives rise to mechanically activated currents that inactivate more slowly than wild-type currents; dbSNP:rs587776987." evidence="9 11 13">
    <original>M</original>
    <variation>R</variation>
    <location>
        <position position="2225"/>
    </location>
</feature>
<feature type="sequence variant" id="VAR_088146" description="Found in Er(5-) blood group phenotype; dbSNP:rs2290901." evidence="19">
    <original>R</original>
    <variation>Q</variation>
    <location>
        <position position="2245"/>
    </location>
</feature>
<feature type="sequence variant" id="VAR_088147" description="Found in Er(a-b+) and Er(a-b-) blood group phenotypes; dbSNP:rs528448732." evidence="19">
    <original>E</original>
    <variation>K</variation>
    <location>
        <position position="2392"/>
    </location>
</feature>
<feature type="sequence variant" id="VAR_088148" description="Found in Er(a-b+) blood group phenotype; dbSNP:rs201950081." evidence="19">
    <original>G</original>
    <variation>S</variation>
    <location>
        <position position="2394"/>
    </location>
</feature>
<feature type="sequence variant" id="VAR_088149" description="Found in Er(4-) blood group phenotype; dbSNP:rs200291894." evidence="19">
    <original>E</original>
    <variation>K</variation>
    <location>
        <position position="2407"/>
    </location>
</feature>
<feature type="sequence variant" id="VAR_088150" description="Found in Er(4-) blood group phenotype; dbSNP:rs200291894." evidence="19">
    <original>E</original>
    <variation>Q</variation>
    <location>
        <position position="2407"/>
    </location>
</feature>
<feature type="sequence variant" id="VAR_076408" description="In LMPHM6; uncertain significance; dbSNP:rs869025601." evidence="17">
    <original>P</original>
    <variation>L</variation>
    <location>
        <position position="2430"/>
    </location>
</feature>
<feature type="sequence variant" id="VAR_076409" description="In LMPHM6; uncertain significance." evidence="17">
    <original>R</original>
    <variation>C</variation>
    <location>
        <position position="2456"/>
    </location>
</feature>
<feature type="sequence variant" id="VAR_069833" description="In DHS1; gives rise to mechanically activated currents that inactivate more slowly than wild-type currents; dbSNP:rs587776988." evidence="9 10 11 12 13 14">
    <original>R</original>
    <variation>H</variation>
    <location>
        <position position="2456"/>
    </location>
</feature>
<feature type="sequence variant" id="VAR_076410" description="In LMPHM6; uncertain significance; dbSNP:rs577860843." evidence="17">
    <original>F</original>
    <variation>L</variation>
    <location>
        <position position="2458"/>
    </location>
</feature>
<feature type="sequence variant" id="VAR_069834" description="In DHS1; increased cation transport in erythroid cells; dbSNP:rs749288233." evidence="10">
    <original>R</original>
    <variation>Q</variation>
    <location>
        <position position="2488"/>
    </location>
</feature>
<feature type="sequence variant" id="VAR_069835" description="In DHS1; gives rise to mechanically activated currents that inactivate more slowly than wild-type currents." evidence="13">
    <original>E</original>
    <variation>ELE</variation>
    <location>
        <position position="2496"/>
    </location>
</feature>
<feature type="mutagenesis site" description="Does not inactivate the protein. gives rise to mechanically activated currents that inactivate more slowly than wild-type currents, suggesting it could shift the channel kinetics from phasic to tonic." evidence="11">
    <original>R</original>
    <variation>K</variation>
    <location>
        <position position="2456"/>
    </location>
</feature>
<feature type="sequence conflict" description="In Ref. 3; BAA13240 and 4; AAI50272." evidence="22" ref="3 4">
    <location>
        <position position="750"/>
    </location>
</feature>
<accession>Q92508</accession>
<accession>A6NHT9</accession>
<accession>A7E2B7</accession>
<accession>Q0KKZ9</accession>
<name>PIEZ1_HUMAN</name>
<sequence>MEPHVLGAVLYWLLLPCALLAACLLRFSGLSLVYLLFLLLLPWFPGPTRCGLQGHTGRLLRALLGLSLLFLVAHLALQICLHIVPRLDQLLGPSCSRWETLSRHIGVTRLDLKDIPNAIRLVAPDLGILVVSSVCLGICGRLARNTRQSPHPRELDDDERDVDASPTAGLQEAATLAPTRRSRLAARFRVTAHWLLVAAGRVLAVTLLALAGIAHPSALSSVYLLLFLALCTWWACHFPISTRGFSRLCVAVGCFGAGHLICLYCYQMPLAQALLPPAGIWARVLGLKDFVGPTNCSSPHALVLNTGLDWPVYASPGVLLLLCYATASLRKLRAYRPSGQRKEAAKGYEARELELAELDQWPQERESDQHVVPTAPDTEADNCIVHELTGQSSVLRRPVRPKRAEPREASPLHSLGHLIMDQSYVCALIAMMVWSITYHSWLTFVLLLWACLIWTVRSRHQLAMLCSPCILLYGMTLCCLRYVWAMDLRPELPTTLGPVSLRQLGLEHTRYPCLDLGAMLLYTLTFWLLLRQFVKEKLLKWAESPAALTEVTVADTEPTRTQTLLQSLGELVKGVYAKYWIYVCAGMFIVVSFAGRLVVYKIVYMFLFLLCLTLFQVYYSLWRKLLKAFWWLVVAYTMLVLIAVYTFQFQDFPAYWRNLTGFTDEQLGDLGLEQFSVSELFSSILVPGFFLLACILQLHYFHRPFMQLTDMEHVSLPGTRLPRWAHRQDAVSGTPLLREEQQEHQQQQQEEEEEEEDSRDEGLGVATPHQATQVPEGAAKWGLVAERLLELAAGFSDVLSRVQVFLRRLLELHVFKLVALYTVWVALKEVSVMNLLLVVLWAFALPYPRFRPMASCLSTVWTCVIIVCKMLYQLKVVNPQEYSSNCTEPFPNSTNLLPTEISQSLLYRGPVDPANWFGVRKGFPNLGYIQNHLQVLLLLVFEAIVYRRQEHYRRQHQLAPLPAQAVFASGTRQQLDQDLLGCLKYFINFFFYKFGLEICFLMAVNVIGQRMNFLVTLHGCWLVAILTRRHRQAIARLWPNYCLFLALFLLYQYLLCLGMPPALCIDYPWRWSRAVPMNSALIKWLYLPDFFRAPNSTNLISDFLLLLCASQQWQVFSAERTEEWQRMAGVNTDRLEPLRGEPNPVPNFIHCRSYLDMLKVAVFRYLFWLVLVVVFVTGATRISIFGLGYLLACFYLLLFGTALLQRDTRARLVLWDCLILYNVTVIISKNMLSLLACVFVEQMQTGFCWVIQLFSLVCTVKGYYDPKEMMDRDQDCLLPVEEAGIIWDSVCFFFLLLQRRVFLSHYYLHVRADLQATALLASRGFALYNAANLKSIDFHRRIEEKSLAQLKRQMERIRAKQEKHRQGRVDRSRPQDTLGPKDPGLEPGPDSPGGSSPPRRQWWRPWLDHATVIHSGDYFLFESDSEEEEEAVPEDPRPSAQSAFQLAYQAWVTNAQAVLRRRQQEQEQARQEQAGQLPTGGGPSQEVEPAEGPEEAAAGRSHVVQRVLSTAQFLWMLGQALVDELTRWLQEFTRHHGTMSDVLRAERYLLTQELLQGGEVHRGVLDQLYTSQAEATLPGPTEAPNAPSTVSSGLGAEEPLSSMTDDMGSPLSTGYHTRSGSEEAVTDPGEREAGASLYQGLMRTASELLLDRRLRIPELEEAELFAEGQGRALRLLRAVYQCVAAHSELLCYFIIILNHMVTASAGSLVLPVLVFLWAMLSIPRPSKRFWMTAIVFTEIAVVVKYLFQFGFFPWNSHVVLRRYENKPYFPPRILGLEKTDGYIKYDLVQLMALFFHRSQLLCYGLWDHEEDSPSKEHDKSGEEEQGAEEGPGVPAATTEDHIQVEARVGPTDGTPEPQVELRPRDTRRISLRFRRRKKEGPARKGAAAIEAEDREEEEGEEEKEAPTGREKRPSRSGGRVRAAGRRLQGFCLSLAQGTYRPLRRFFHDILHTKYRAATDVYALMFLADVVDFIIIIFGFWAFGKHSAATDITSSLSDDQVPEAFLVMLLIQFSTMVVDRALYLRKTVLGKLAFQVALVLAIHLWMFFILPAVTERMFNQNVVAQLWYFVKCIYFALSAYQIRCGYPTRILGNFLTKKYNHLNLFLFQGFRLVPFLVELRAVMDWVWTDTTLSLSSWMCVEDIYANIFIIKCSRETEKKYPQPKGQKKKKIVKYGMGGLIILFLIAIIWFPLLFMSLVRSVVGVVNQPIDVTVTLKLGGYEPLFTMSAQQPSIIPFTAQAYEELSRQFDPQPLAMQFISQYSPEDIVTAQIEGSSGALWRISPPSRAQMKRELYNGTADITLRFTWNFQRDLAKGGTVEYANEKHMLALAPNSTARRQLASLLEGTSDQSVVIPNLFPKYIRAPNGPEANPVKQLQPNEEADYLGVRIQLRREQGAGATGFLEWWVIELQECRTDCNLLPMVIFSDKVSPPSLGFLAGYGIMGLYVSIVLVIGKFVRGFFSEISHSIMFEELPCVDRILKLCQDIFLVRETRELELEEELYAKLIFLYRSPETMIKWTREKE</sequence>
<proteinExistence type="evidence at protein level"/>
<keyword id="KW-0002">3D-structure</keyword>
<keyword id="KW-0095">Blood group antigen</keyword>
<keyword id="KW-1003">Cell membrane</keyword>
<keyword id="KW-0966">Cell projection</keyword>
<keyword id="KW-0175">Coiled coil</keyword>
<keyword id="KW-0903">Direct protein sequencing</keyword>
<keyword id="KW-0225">Disease variant</keyword>
<keyword id="KW-1015">Disulfide bond</keyword>
<keyword id="KW-0256">Endoplasmic reticulum</keyword>
<keyword id="KW-0325">Glycoprotein</keyword>
<keyword id="KW-0360">Hereditary hemolytic anemia</keyword>
<keyword id="KW-0407">Ion channel</keyword>
<keyword id="KW-0406">Ion transport</keyword>
<keyword id="KW-0472">Membrane</keyword>
<keyword id="KW-0597">Phosphoprotein</keyword>
<keyword id="KW-1267">Proteomics identification</keyword>
<keyword id="KW-1185">Reference proteome</keyword>
<keyword id="KW-0812">Transmembrane</keyword>
<keyword id="KW-1133">Transmembrane helix</keyword>
<keyword id="KW-0813">Transport</keyword>
<comment type="function">
    <text evidence="1 3 16 18">Pore-forming subunit of the mechanosensitive non-specific cation Piezo channel required for rapidly adapting mechanically activated (MA) currents and has a key role in sensing touch and tactile pain (PubMed:23479567, PubMed:23695678, PubMed:25955826, PubMed:37590348). Piezo channels are homotrimeric three-blade propeller-shaped structures that utilize a cap-motion and plug-and-latch mechanism to gate their ion-conducting pathways (PubMed:37590348). Generates currents characterized by a linear current-voltage relationship that are sensitive to ruthenium red and gadolinium (By similarity). Conductance to monovalent alkali ions is highest for K(+), intermediate for Na(+) and lowest for Li(+) (PubMed:25955826). Divalent ions except for Mn(2+) permeate the channel but more slowly than the monovalent ions and they also reduce K(+) currents (PubMed:25955826). Plays a key role in epithelial cell adhesion by maintaining integrin activation through R-Ras recruitment to the ER, most probably in its activated state, and subsequent stimulation of calpain signaling (PubMed:20016066). In inner ear hair cells, PIEZO1/2 subunits may constitute part of the mechanotransducer (MET) non-selective cation channel complex where they may act as pore-forming ion-conducting component in the complex (By similarity). In the kidney, may contribute to the detection of intraluminal pressure changes and to urine flow sensing (By similarity). Acts as a shear-stress sensor that promotes endothelial cell organization and alignment in the direction of blood flow through calpain activation (PubMed:25119035). Plays a key role in blood vessel formation and vascular structure in both development and adult physiology (By similarity). Acts as a sensor of phosphatidylserine (PS) flipping at the plasma membrane and governs morphogenesis of muscle cells (By similarity). In myoblasts, flippase-mediated PS enrichment at the inner leaflet of plasma membrane triggers channel activation and Ca2+ influx followed by Rho GTPases signal transduction, leading to assembly of cortical actomyosin fibers and myotube formation (PubMed:29799007).</text>
</comment>
<comment type="catalytic activity">
    <reaction evidence="16">
        <text>K(+)(in) = K(+)(out)</text>
        <dbReference type="Rhea" id="RHEA:29463"/>
        <dbReference type="ChEBI" id="CHEBI:29103"/>
    </reaction>
</comment>
<comment type="catalytic activity">
    <reaction evidence="16">
        <text>Na(+)(in) = Na(+)(out)</text>
        <dbReference type="Rhea" id="RHEA:34963"/>
        <dbReference type="ChEBI" id="CHEBI:29101"/>
    </reaction>
</comment>
<comment type="catalytic activity">
    <reaction evidence="16">
        <text>Ca(2+)(in) = Ca(2+)(out)</text>
        <dbReference type="Rhea" id="RHEA:29671"/>
        <dbReference type="ChEBI" id="CHEBI:29108"/>
    </reaction>
</comment>
<comment type="catalytic activity">
    <reaction evidence="16">
        <text>Mg(2+)(in) = Mg(2+)(out)</text>
        <dbReference type="Rhea" id="RHEA:29827"/>
        <dbReference type="ChEBI" id="CHEBI:18420"/>
    </reaction>
</comment>
<comment type="activity regulation">
    <text evidence="16 18 20">Regulated by auxillary subunits MDFIC and MDFI (PubMed:37590348). Down-regulated by phosphatidylserines exposed on the cell surface. Divalent ions decrease the single-channel permeability of K(+) (PubMed:25955826).</text>
</comment>
<comment type="subunit">
    <text evidence="1">Homotrimer; the homotrimer forms a propeller-shaped Piezo channel with a cation-ion conducting pore (PubMed:37590348). Heterotrimeric interaction may occur between PIEZO1 and PIEZO2 (By similarity). Interacts with PKD2 (By similarity). Interacts with STOML3 (By similarity). Interacts with TMC1, TMC2, PCDH15 and CIB2; the interaction may be part of the MET complex (By similarity). Interacts with MDFIC (via C-terminus); the interaction prolongs Piezo channel inactivation (PubMed:37590348). Interacts with MDFI (via C-terminus); the interaction prolongs Piezo channel inactivation (PubMed:37590348).</text>
</comment>
<comment type="interaction">
    <interactant intactId="EBI-10986212">
        <id>Q92508</id>
    </interactant>
    <interactant intactId="EBI-11066876">
        <id>Q6UW02</id>
        <label>CYP20A1</label>
    </interactant>
    <organismsDiffer>false</organismsDiffer>
    <experiments>2</experiments>
</comment>
<comment type="interaction">
    <interactant intactId="EBI-10986212">
        <id>Q92508</id>
    </interactant>
    <interactant intactId="EBI-743871">
        <id>P04155</id>
        <label>TFF1</label>
    </interactant>
    <organismsDiffer>false</organismsDiffer>
    <experiments>5</experiments>
</comment>
<comment type="subcellular location">
    <subcellularLocation>
        <location evidence="8">Endoplasmic reticulum membrane</location>
        <topology evidence="1">Multi-pass membrane protein</topology>
    </subcellularLocation>
    <subcellularLocation>
        <location evidence="2">Endoplasmic reticulum-Golgi intermediate compartment membrane</location>
    </subcellularLocation>
    <subcellularLocation>
        <location evidence="9 10">Cell membrane</location>
        <topology evidence="1">Multi-pass membrane protein</topology>
    </subcellularLocation>
    <subcellularLocation>
        <location evidence="15">Cell projection</location>
        <location evidence="15">Lamellipodium membrane</location>
    </subcellularLocation>
    <text evidence="1 9 10 15">In erythrocytes, located in the plasma membrane (PubMed:22529292, PubMed:23479567). Accumulates at the leading apical lamellipodia of endothelial cells in response to shear stress (PubMed:25119035). Colocalizes with F-actin and MYH9 at the actomyosin cortex in myoblasts.</text>
</comment>
<comment type="tissue specificity">
    <text evidence="6 9 10 18">Expressed in numerous tissues. In normal brain, expressed exclusively in neurons, not in astrocytes. In Alzheimer disease brains, expressed in about half of the activated astrocytes located around classical senile plaques. In Parkinson disease substantia nigra, not detected in melanin-containing neurons nor in activated astrocytes. Expressed in erythrocytes (at protein level). Expressed in myoblasts (at protein level).</text>
</comment>
<comment type="developmental stage">
    <text evidence="10">At 17 weeks of gestation, strongly expressed in hepatic erythroblasts. At that stage, also expressed in fetal splenic plasma cells and in lymphatic vessel of fetal peritoneum. In vitro, up-regulated during the erythroid differentiation of CD34+ cells from healthy donors (at protein level).</text>
</comment>
<comment type="polymorphism">
    <text evidence="19">PIEZO1 is responsible for the Er blood group system (ER) [MIM:620207]. At least five antigens have been identified: Er(a), Er(b), Er(3), Er(4), and Er(5). The molecular basis of the Er(a)/Er(b) polymorphism is a single variation at position 2394; Gly-2394 corresponds to Er(a) and Ser-2394 to Er(b), while the Er(3) antigen is recognized by antibodies produced by Er(a-b-) individuals. The Er(4) and Er(5) antigens are defined by Glu-2407 and Arg-2245, respectively. Alloantibodies against Er(4) and Er(5) are associated with hemolytic disease of the fetus and newborn.</text>
</comment>
<comment type="disease" evidence="9 10 11 12 13 14">
    <disease id="DI-03801">
        <name>Dehydrated hereditary stomatocytosis 1 with or without pseudohyperkalemia and/or perinatal edema</name>
        <acronym>DHS1</acronym>
        <description>An autosomal dominant hemolytic anemia characterized by primary erythrocyte dehydration. DHS erythrocytes exhibit decreased total cation and potassium content that are not accompanied by a proportional net gain of sodium and water. DHS patients typically exhibit mild to moderate compensated hemolytic anemia, with an increased erythrocyte mean corpuscular hemoglobin concentration and a decreased osmotic fragility, both of which reflect cellular dehydration. Patients may also show perinatal edema and pseudohyperkalemia due to loss of potassium from red cells stored at room temperature. A minor proportion of red cells appear as stomatocytes on blood films. Complications such as splenomegaly and cholelithiasis, resulting from increased red cell trapping in the spleen and elevated bilirubin levels, respectively, may occur. The course of DHS is frequently associated with iron overload, which may lead to hepatosiderosis.</description>
        <dbReference type="MIM" id="194380"/>
    </disease>
    <text>The disease is caused by variants affecting the gene represented in this entry. All disease-causing mutations characterized so far produce a gain-of-function phenotype, mutated channels exhibiting increased cation transport in erythroid cells, that could be due to slower channel inactivation rate compared to the wild-type protein.</text>
</comment>
<comment type="disease" evidence="17">
    <disease id="DI-04669">
        <name>Lymphatic malformation 6</name>
        <acronym>LMPHM6</acronym>
        <description>A form of primary lymphedema, a disease characterized by swelling of body parts due to developmental anomalies and functional defects of the lymphatic system. Patients with lymphedema may suffer from recurrent local infections. LMPHM6 is an autosomal recessive, severe form manifesting as generalized lymphatic dysplasia. It is characterized by uniform, widespread swelling of all segments of the body, with systemic involvement such as intestinal and/or pulmonary lymphangiectasia, pleural effusions, chylothoraces and/or pericardial effusions, and with a high incidence of non- immune hydrops fetalis.</description>
        <dbReference type="MIM" id="616843"/>
    </disease>
    <text>The disease is caused by variants affecting the gene represented in this entry.</text>
</comment>
<comment type="miscellaneous">
    <text>Piezo comes from the Greek 'piesi' meaning pressure.</text>
</comment>
<comment type="similarity">
    <text evidence="22">Belongs to the PIEZO (TC 1.A.75) family.</text>
</comment>
<gene>
    <name evidence="23" type="primary">PIEZO1</name>
    <name type="synonym">FAM38A</name>
    <name type="synonym">KIAA0233</name>
</gene>
<protein>
    <recommendedName>
        <fullName evidence="22">Piezo-type mechanosensitive ion channel component 1</fullName>
    </recommendedName>
    <alternativeName>
        <fullName>Membrane protein induced by beta-amyloid treatment</fullName>
        <shortName>Mib</shortName>
    </alternativeName>
    <alternativeName>
        <fullName>Protein FAM38A</fullName>
    </alternativeName>
</protein>
<reference key="1">
    <citation type="journal article" date="2004" name="Nature">
        <title>The sequence and analysis of duplication-rich human chromosome 16.</title>
        <authorList>
            <person name="Martin J."/>
            <person name="Han C."/>
            <person name="Gordon L.A."/>
            <person name="Terry A."/>
            <person name="Prabhakar S."/>
            <person name="She X."/>
            <person name="Xie G."/>
            <person name="Hellsten U."/>
            <person name="Chan Y.M."/>
            <person name="Altherr M."/>
            <person name="Couronne O."/>
            <person name="Aerts A."/>
            <person name="Bajorek E."/>
            <person name="Black S."/>
            <person name="Blumer H."/>
            <person name="Branscomb E."/>
            <person name="Brown N.C."/>
            <person name="Bruno W.J."/>
            <person name="Buckingham J.M."/>
            <person name="Callen D.F."/>
            <person name="Campbell C.S."/>
            <person name="Campbell M.L."/>
            <person name="Campbell E.W."/>
            <person name="Caoile C."/>
            <person name="Challacombe J.F."/>
            <person name="Chasteen L.A."/>
            <person name="Chertkov O."/>
            <person name="Chi H.C."/>
            <person name="Christensen M."/>
            <person name="Clark L.M."/>
            <person name="Cohn J.D."/>
            <person name="Denys M."/>
            <person name="Detter J.C."/>
            <person name="Dickson M."/>
            <person name="Dimitrijevic-Bussod M."/>
            <person name="Escobar J."/>
            <person name="Fawcett J.J."/>
            <person name="Flowers D."/>
            <person name="Fotopulos D."/>
            <person name="Glavina T."/>
            <person name="Gomez M."/>
            <person name="Gonzales E."/>
            <person name="Goodstein D."/>
            <person name="Goodwin L.A."/>
            <person name="Grady D.L."/>
            <person name="Grigoriev I."/>
            <person name="Groza M."/>
            <person name="Hammon N."/>
            <person name="Hawkins T."/>
            <person name="Haydu L."/>
            <person name="Hildebrand C.E."/>
            <person name="Huang W."/>
            <person name="Israni S."/>
            <person name="Jett J."/>
            <person name="Jewett P.B."/>
            <person name="Kadner K."/>
            <person name="Kimball H."/>
            <person name="Kobayashi A."/>
            <person name="Krawczyk M.-C."/>
            <person name="Leyba T."/>
            <person name="Longmire J.L."/>
            <person name="Lopez F."/>
            <person name="Lou Y."/>
            <person name="Lowry S."/>
            <person name="Ludeman T."/>
            <person name="Manohar C.F."/>
            <person name="Mark G.A."/>
            <person name="McMurray K.L."/>
            <person name="Meincke L.J."/>
            <person name="Morgan J."/>
            <person name="Moyzis R.K."/>
            <person name="Mundt M.O."/>
            <person name="Munk A.C."/>
            <person name="Nandkeshwar R.D."/>
            <person name="Pitluck S."/>
            <person name="Pollard M."/>
            <person name="Predki P."/>
            <person name="Parson-Quintana B."/>
            <person name="Ramirez L."/>
            <person name="Rash S."/>
            <person name="Retterer J."/>
            <person name="Ricke D.O."/>
            <person name="Robinson D.L."/>
            <person name="Rodriguez A."/>
            <person name="Salamov A."/>
            <person name="Saunders E.H."/>
            <person name="Scott D."/>
            <person name="Shough T."/>
            <person name="Stallings R.L."/>
            <person name="Stalvey M."/>
            <person name="Sutherland R.D."/>
            <person name="Tapia R."/>
            <person name="Tesmer J.G."/>
            <person name="Thayer N."/>
            <person name="Thompson L.S."/>
            <person name="Tice H."/>
            <person name="Torney D.C."/>
            <person name="Tran-Gyamfi M."/>
            <person name="Tsai M."/>
            <person name="Ulanovsky L.E."/>
            <person name="Ustaszewska A."/>
            <person name="Vo N."/>
            <person name="White P.S."/>
            <person name="Williams A.L."/>
            <person name="Wills P.L."/>
            <person name="Wu J.-R."/>
            <person name="Wu K."/>
            <person name="Yang J."/>
            <person name="DeJong P."/>
            <person name="Bruce D."/>
            <person name="Doggett N.A."/>
            <person name="Deaven L."/>
            <person name="Schmutz J."/>
            <person name="Grimwood J."/>
            <person name="Richardson P."/>
            <person name="Rokhsar D.S."/>
            <person name="Eichler E.E."/>
            <person name="Gilna P."/>
            <person name="Lucas S.M."/>
            <person name="Myers R.M."/>
            <person name="Rubin E.M."/>
            <person name="Pennacchio L.A."/>
        </authorList>
    </citation>
    <scope>NUCLEOTIDE SEQUENCE [LARGE SCALE GENOMIC DNA]</scope>
</reference>
<reference key="2">
    <citation type="journal article" date="2006" name="Brain Res.">
        <title>A novel membrane protein, encoded by the gene covering KIAA0233, is transcriptionally induced in senile plaque-associated astrocytes.</title>
        <authorList>
            <person name="Satoh K."/>
            <person name="Hata M."/>
            <person name="Takahara S."/>
            <person name="Tsuzaki H."/>
            <person name="Yokota H."/>
            <person name="Akatsu H."/>
            <person name="Yamamoto T."/>
            <person name="Kosaka K."/>
            <person name="Yamada T."/>
        </authorList>
    </citation>
    <scope>NUCLEOTIDE SEQUENCE [MRNA] OF 432-2521</scope>
    <scope>TISSUE SPECIFICITY</scope>
</reference>
<reference key="3">
    <citation type="journal article" date="1996" name="DNA Res.">
        <title>Prediction of the coding sequences of unidentified human genes. VI. The coding sequences of 80 new genes (KIAA0201-KIAA0280) deduced by analysis of cDNA clones from cell line KG-1 and brain.</title>
        <authorList>
            <person name="Nagase T."/>
            <person name="Seki N."/>
            <person name="Ishikawa K."/>
            <person name="Ohira M."/>
            <person name="Kawarabayasi Y."/>
            <person name="Ohara O."/>
            <person name="Tanaka A."/>
            <person name="Kotani H."/>
            <person name="Miyajima N."/>
            <person name="Nomura N."/>
        </authorList>
    </citation>
    <scope>NUCLEOTIDE SEQUENCE [LARGE SCALE MRNA] OF 486-2521</scope>
    <source>
        <tissue>Bone marrow</tissue>
    </source>
</reference>
<reference key="4">
    <citation type="journal article" date="2004" name="Genome Res.">
        <title>The status, quality, and expansion of the NIH full-length cDNA project: the Mammalian Gene Collection (MGC).</title>
        <authorList>
            <consortium name="The MGC Project Team"/>
        </authorList>
    </citation>
    <scope>NUCLEOTIDE SEQUENCE [LARGE SCALE MRNA] OF 486-2521</scope>
</reference>
<reference key="5">
    <citation type="journal article" date="2012" name="Blood">
        <title>Mutations in the mechanotransduction protein PIEZO1 are associated with hereditary xerocytosis.</title>
        <authorList>
            <person name="Zarychanski R."/>
            <person name="Schulz V.P."/>
            <person name="Houston B.L."/>
            <person name="Maksimova Y."/>
            <person name="Houston D.S."/>
            <person name="Smith B."/>
            <person name="Rinehart J."/>
            <person name="Gallagher P.G."/>
        </authorList>
    </citation>
    <scope>PROTEIN SEQUENCE OF 955-972; 1324-1334; 1548-1562 AND 1656-1671</scope>
    <scope>VARIANTS DHS1 ARG-2225 AND HIS-2456</scope>
    <scope>SUBCELLULAR LOCATION</scope>
    <scope>TISSUE SPECIFICITY</scope>
</reference>
<reference key="6">
    <citation type="journal article" date="2006" name="Cell">
        <title>Global, in vivo, and site-specific phosphorylation dynamics in signaling networks.</title>
        <authorList>
            <person name="Olsen J.V."/>
            <person name="Blagoev B."/>
            <person name="Gnad F."/>
            <person name="Macek B."/>
            <person name="Kumar C."/>
            <person name="Mortensen P."/>
            <person name="Mann M."/>
        </authorList>
    </citation>
    <scope>IDENTIFICATION BY MASS SPECTROMETRY [LARGE SCALE ANALYSIS]</scope>
    <source>
        <tissue>Cervix carcinoma</tissue>
    </source>
</reference>
<reference key="7">
    <citation type="journal article" date="2008" name="Proc. Natl. Acad. Sci. U.S.A.">
        <title>A quantitative atlas of mitotic phosphorylation.</title>
        <authorList>
            <person name="Dephoure N."/>
            <person name="Zhou C."/>
            <person name="Villen J."/>
            <person name="Beausoleil S.A."/>
            <person name="Bakalarski C.E."/>
            <person name="Elledge S.J."/>
            <person name="Gygi S.P."/>
        </authorList>
    </citation>
    <scope>PHOSPHORYLATION [LARGE SCALE ANALYSIS] AT SER-1391; SER-1646 AND THR-1854</scope>
    <scope>IDENTIFICATION BY MASS SPECTROMETRY [LARGE SCALE ANALYSIS]</scope>
    <source>
        <tissue>Cervix carcinoma</tissue>
    </source>
</reference>
<reference key="8">
    <citation type="journal article" date="2009" name="Nat. Biotechnol.">
        <title>Mass-spectrometric identification and relative quantification of N-linked cell surface glycoproteins.</title>
        <authorList>
            <person name="Wollscheid B."/>
            <person name="Bausch-Fluck D."/>
            <person name="Henderson C."/>
            <person name="O'Brien R."/>
            <person name="Bibel M."/>
            <person name="Schiess R."/>
            <person name="Aebersold R."/>
            <person name="Watts J.D."/>
        </authorList>
    </citation>
    <scope>GLYCOSYLATION [LARGE SCALE ANALYSIS] AT ASN-2294</scope>
    <source>
        <tissue>Leukemic T-cell</tissue>
    </source>
</reference>
<reference key="9">
    <citation type="journal article" date="2009" name="Sci. Signal.">
        <title>Quantitative phosphoproteomic analysis of T cell receptor signaling reveals system-wide modulation of protein-protein interactions.</title>
        <authorList>
            <person name="Mayya V."/>
            <person name="Lundgren D.H."/>
            <person name="Hwang S.-I."/>
            <person name="Rezaul K."/>
            <person name="Wu L."/>
            <person name="Eng J.K."/>
            <person name="Rodionov V."/>
            <person name="Han D.K."/>
        </authorList>
    </citation>
    <scope>PHOSPHORYLATION [LARGE SCALE ANALYSIS] AT SER-1646</scope>
    <scope>IDENTIFICATION BY MASS SPECTROMETRY [LARGE SCALE ANALYSIS]</scope>
    <source>
        <tissue>Leukemic T-cell</tissue>
    </source>
</reference>
<reference key="10">
    <citation type="journal article" date="2010" name="J. Cell Sci.">
        <title>Integrin activation by Fam38A uses a novel mechanism of R-Ras targeting to the endoplasmic reticulum.</title>
        <authorList>
            <person name="McHugh B.J."/>
            <person name="Buttery R."/>
            <person name="Lad Y."/>
            <person name="Banks S."/>
            <person name="Haslett C."/>
            <person name="Sethi T."/>
        </authorList>
    </citation>
    <scope>FUNCTION</scope>
    <scope>SUBCELLULAR LOCATION</scope>
</reference>
<reference key="11">
    <citation type="journal article" date="2010" name="Sci. Signal.">
        <title>Quantitative phosphoproteomics reveals widespread full phosphorylation site occupancy during mitosis.</title>
        <authorList>
            <person name="Olsen J.V."/>
            <person name="Vermeulen M."/>
            <person name="Santamaria A."/>
            <person name="Kumar C."/>
            <person name="Miller M.L."/>
            <person name="Jensen L.J."/>
            <person name="Gnad F."/>
            <person name="Cox J."/>
            <person name="Jensen T.S."/>
            <person name="Nigg E.A."/>
            <person name="Brunak S."/>
            <person name="Mann M."/>
        </authorList>
    </citation>
    <scope>PHOSPHORYLATION [LARGE SCALE ANALYSIS] AT SER-1391 AND SER-1646</scope>
    <scope>IDENTIFICATION BY MASS SPECTROMETRY [LARGE SCALE ANALYSIS]</scope>
    <source>
        <tissue>Cervix carcinoma</tissue>
    </source>
</reference>
<reference key="12">
    <citation type="journal article" date="2013" name="J. Proteome Res.">
        <title>Toward a comprehensive characterization of a human cancer cell phosphoproteome.</title>
        <authorList>
            <person name="Zhou H."/>
            <person name="Di Palma S."/>
            <person name="Preisinger C."/>
            <person name="Peng M."/>
            <person name="Polat A.N."/>
            <person name="Heck A.J."/>
            <person name="Mohammed S."/>
        </authorList>
    </citation>
    <scope>PHOSPHORYLATION [LARGE SCALE ANALYSIS] AT THR-734; SER-758; SER-1391; SER-1396; SER-1636; SER-1646 AND THR-1854</scope>
    <scope>IDENTIFICATION BY MASS SPECTROMETRY [LARGE SCALE ANALYSIS]</scope>
    <source>
        <tissue>Cervix carcinoma</tissue>
        <tissue>Erythroleukemia</tissue>
    </source>
</reference>
<reference key="13">
    <citation type="journal article" date="2014" name="J. Proteomics">
        <title>An enzyme assisted RP-RPLC approach for in-depth analysis of human liver phosphoproteome.</title>
        <authorList>
            <person name="Bian Y."/>
            <person name="Song C."/>
            <person name="Cheng K."/>
            <person name="Dong M."/>
            <person name="Wang F."/>
            <person name="Huang J."/>
            <person name="Sun D."/>
            <person name="Wang L."/>
            <person name="Ye M."/>
            <person name="Zou H."/>
        </authorList>
    </citation>
    <scope>PHOSPHORYLATION [LARGE SCALE ANALYSIS] AT SER-1646</scope>
    <scope>IDENTIFICATION BY MASS SPECTROMETRY [LARGE SCALE ANALYSIS]</scope>
    <source>
        <tissue>Liver</tissue>
    </source>
</reference>
<reference key="14">
    <citation type="journal article" date="2014" name="Nature">
        <title>Piezo1 integration of vascular architecture with physiological force.</title>
        <authorList>
            <person name="Li J."/>
            <person name="Hou B."/>
            <person name="Tumova S."/>
            <person name="Muraki K."/>
            <person name="Bruns A."/>
            <person name="Ludlow M.J."/>
            <person name="Sedo A."/>
            <person name="Hyman A.J."/>
            <person name="McKeown L."/>
            <person name="Young R.S."/>
            <person name="Yuldasheva N.Y."/>
            <person name="Majeed Y."/>
            <person name="Wilson L.A."/>
            <person name="Rode B."/>
            <person name="Bailey M.A."/>
            <person name="Kim H.R."/>
            <person name="Fu Z."/>
            <person name="Carter D.A."/>
            <person name="Bilton J."/>
            <person name="Imrie H."/>
            <person name="Ajuh P."/>
            <person name="Dear T.N."/>
            <person name="Cubbon R.M."/>
            <person name="Kearney M.T."/>
            <person name="Prasad R.K."/>
            <person name="Evans P.C."/>
            <person name="Ainscough J.F."/>
            <person name="Beech D.J."/>
        </authorList>
    </citation>
    <scope>SUBCELLULAR LOCATION</scope>
</reference>
<reference key="15">
    <citation type="journal article" date="2015" name="PLoS ONE">
        <title>Ionic Selectivity and Permeation Properties of Human PIEZO1 Channels.</title>
        <authorList>
            <person name="Gnanasambandam R."/>
            <person name="Bae C."/>
            <person name="Gottlieb P.A."/>
            <person name="Sachs F."/>
        </authorList>
    </citation>
    <scope>FUNCTION</scope>
    <scope>TRANSPORTER ACTIVITY</scope>
    <scope>ACTIVITY REGULATION</scope>
</reference>
<reference key="16">
    <citation type="journal article" date="2018" name="Nat. Commun.">
        <title>Cell surface flip-flop of phosphatidylserine is critical for PIEZO1-mediated myotube formation.</title>
        <authorList>
            <person name="Tsuchiya M."/>
            <person name="Hara Y."/>
            <person name="Okuda M."/>
            <person name="Itoh K."/>
            <person name="Nishioka R."/>
            <person name="Shiomi A."/>
            <person name="Nagao K."/>
            <person name="Mori M."/>
            <person name="Mori Y."/>
            <person name="Ikenouchi J."/>
            <person name="Suzuki R."/>
            <person name="Tanaka M."/>
            <person name="Ohwada T."/>
            <person name="Aoki J."/>
            <person name="Kanagawa M."/>
            <person name="Toda T."/>
            <person name="Nagata Y."/>
            <person name="Matsuda R."/>
            <person name="Takayama Y."/>
            <person name="Tominaga M."/>
            <person name="Umeda M."/>
        </authorList>
    </citation>
    <scope>FUNCTION</scope>
    <scope>ACTIVITY REGULATION</scope>
    <scope>TISSUE SPECIFICITY</scope>
</reference>
<reference key="17">
    <citation type="journal article" date="2023" name="Science">
        <title>MyoD-family inhibitor proteins act as auxiliary subunits of Piezo channels.</title>
        <authorList>
            <person name="Zhou Z."/>
            <person name="Ma X."/>
            <person name="Lin Y."/>
            <person name="Cheng D."/>
            <person name="Bavi N."/>
            <person name="Secker G.A."/>
            <person name="Li J.V."/>
            <person name="Janbandhu V."/>
            <person name="Sutton D.L."/>
            <person name="Scott H.S."/>
            <person name="Yao M."/>
            <person name="Harvey R.P."/>
            <person name="Harvey N.L."/>
            <person name="Corry B."/>
            <person name="Zhang Y."/>
            <person name="Cox C.D."/>
        </authorList>
    </citation>
    <scope>FUNCTION</scope>
    <scope>ACTIVITY REGULATION</scope>
    <scope>SUBUNIT</scope>
    <scope>INTERACTION WITH MDFIC AND MDFI</scope>
</reference>
<reference key="18">
    <citation type="journal article" date="2013" name="Blood">
        <title>Multiple clinical forms of dehydrated hereditary stomatocytosis arise from mutations in PIEZO1.</title>
        <authorList>
            <person name="Andolfo I."/>
            <person name="Alper S.L."/>
            <person name="De Franceschi L."/>
            <person name="Auriemma C."/>
            <person name="Russo R."/>
            <person name="De Falco L."/>
            <person name="Vallefuoco F."/>
            <person name="Esposito M.R."/>
            <person name="Vandorpe D.H."/>
            <person name="Shmukler B.E."/>
            <person name="Narayan R."/>
            <person name="Montanaro D."/>
            <person name="D'Armiento M."/>
            <person name="Vetro A."/>
            <person name="Limongelli I."/>
            <person name="Zuffardi O."/>
            <person name="Glader B.E."/>
            <person name="Schrier S.L."/>
            <person name="Brugnara C."/>
            <person name="Stewart G.W."/>
            <person name="Delaunay J."/>
            <person name="Iolascon A."/>
        </authorList>
    </citation>
    <scope>VARIANTS DHS1 SER-718; SER-782; GLN-808; LEU-1117; ASP-2003; VAL-2020; MET-2127; 2166-LYS--LYS-2169 DEL; HIS-2456 AND GLN-2488</scope>
    <scope>CHARACTERIZATION OF VARIANTS DHS1 HIS-2456 AND GLN-2488</scope>
    <scope>FUNCTION</scope>
    <scope>SUBCELLULAR LOCATION</scope>
    <scope>TISSUE SPECIFICITY</scope>
    <scope>DEVELOPMENTAL STAGE</scope>
</reference>
<reference key="19">
    <citation type="journal article" date="2013" name="Nat. Commun.">
        <title>Dehydrated hereditary stomatocytosis linked to gain-of-function mutations in mechanically activated PIEZO1 ion channels.</title>
        <authorList>
            <person name="Albuisson J."/>
            <person name="Murthy S.E."/>
            <person name="Bandell M."/>
            <person name="Coste B."/>
            <person name="Louis-Dit-Picard H."/>
            <person name="Mathur J."/>
            <person name="Feneant-Thibault M."/>
            <person name="Tertian G."/>
            <person name="de Jaureguiberry J.P."/>
            <person name="Syfuss P.Y."/>
            <person name="Cahalan S."/>
            <person name="Garcon L."/>
            <person name="Toutain F."/>
            <person name="Simon Rohrlich P."/>
            <person name="Delaunay J."/>
            <person name="Picard V."/>
            <person name="Jeunemaitre X."/>
            <person name="Patapoutian A."/>
        </authorList>
    </citation>
    <scope>VARIANTS DHS1 PRO-1358; THR-2020; MET-2127 AND LEU-GLU-2496 INS</scope>
    <scope>CHARACTERIZATION OF VARIANTS DHS1 PRO-1358; THR-2020; MET-2127; LEU-GLU-2496 INS; ARG-2225 AND HIS-2456</scope>
    <scope>FUNCTION</scope>
    <scope>SUBCELLULAR LOCATION</scope>
</reference>
<reference key="20">
    <citation type="journal article" date="2013" name="Proc. Natl. Acad. Sci. U.S.A.">
        <title>Xerocytosis is caused by mutations that alter the kinetics of the mechanosensitive channel PIEZO1.</title>
        <authorList>
            <person name="Bae C."/>
            <person name="Gnanasambandam R."/>
            <person name="Nicolai C."/>
            <person name="Sachs F."/>
            <person name="Gottlieb P.A."/>
        </authorList>
    </citation>
    <scope>VARIANTS DHS1 ARG-2225 AND HIS-2456</scope>
    <scope>CHARACTERIZATION OF VARIANTS DHS1 ARG-2225 AND HIS-2456</scope>
    <scope>MUTAGENESIS OF ARG-2456</scope>
</reference>
<reference key="21">
    <citation type="journal article" date="2014" name="Blood Cells Mol. Dis.">
        <title>Dehydrated stomatocytic anemia due to the heterozygous mutation R2456H in the mechanosensitive cation channel PIEZO1: a case report.</title>
        <authorList>
            <person name="Shmukler B.E."/>
            <person name="Vandorpe D.H."/>
            <person name="Rivera A."/>
            <person name="Auerbach M."/>
            <person name="Brugnara C."/>
            <person name="Alper S.L."/>
        </authorList>
    </citation>
    <scope>VARIANT DHS1 HIS-2456</scope>
</reference>
<reference key="22">
    <citation type="journal article" date="2014" name="Clin. Genet.">
        <title>Recurrent mutation in the PIEZO1 gene in two families of hereditary xerocytosis with fetal hydrops.</title>
        <authorList>
            <person name="Beneteau C."/>
            <person name="Thierry G."/>
            <person name="Blesson S."/>
            <person name="Le Vaillant C."/>
            <person name="Picard V."/>
            <person name="Bene M.C."/>
            <person name="Eveillard M."/>
            <person name="Le Caignec C."/>
        </authorList>
    </citation>
    <scope>VARIANT DHS1 HIS-2456</scope>
</reference>
<reference key="23">
    <citation type="journal article" date="2015" name="Nat. Commun.">
        <title>Novel mutations in PIEZO1 cause an autosomal recessive generalized lymphatic dysplasia with non-immune hydrops fetalis.</title>
        <authorList>
            <person name="Fotiou E."/>
            <person name="Martin-Almedina S."/>
            <person name="Simpson M.A."/>
            <person name="Lin S."/>
            <person name="Gordon K."/>
            <person name="Brice G."/>
            <person name="Atton G."/>
            <person name="Jeffery I."/>
            <person name="Rees D.C."/>
            <person name="Mignot C."/>
            <person name="Vogt J."/>
            <person name="Homfray T."/>
            <person name="Snyder M.P."/>
            <person name="Rockson S.G."/>
            <person name="Jeffery S."/>
            <person name="Mortimer P.S."/>
            <person name="Mansour S."/>
            <person name="Ostergaard P."/>
        </authorList>
    </citation>
    <scope>INVOLVEMENT IN LMPHM6</scope>
    <scope>VARIANTS LMPHM6 MET-939; LEU-2430; CYS-2456 AND LEU-2458</scope>
</reference>
<reference key="24">
    <citation type="journal article" date="2023" name="Blood">
        <title>Missense mutations in PIEZO1, which encodes the Piezo1 mechanosensor protein, define Er red blood cell antigens.</title>
        <authorList>
            <person name="Karamatic Crew V."/>
            <person name="Tilley L.A."/>
            <person name="Satchwell T.J."/>
            <person name="AlSubhi S.A."/>
            <person name="Jones B."/>
            <person name="Spring F.A."/>
            <person name="Walser P.J."/>
            <person name="Martins Freire C."/>
            <person name="Murciano N."/>
            <person name="Rotordam M.G."/>
            <person name="Woestmann S.J."/>
            <person name="Hamed M."/>
            <person name="Alradwan R."/>
            <person name="AlKhrousey M."/>
            <person name="Skidmore I."/>
            <person name="Lewis S."/>
            <person name="Hussain S."/>
            <person name="Jackson J."/>
            <person name="Latham T."/>
            <person name="Kilby M.D."/>
            <person name="Lester W."/>
            <person name="Becker N."/>
            <person name="Rapedius M."/>
            <person name="Toye A.M."/>
            <person name="Thornton N.M."/>
        </authorList>
    </citation>
    <scope>POLYMORPHISM</scope>
    <scope>INVOLVEMENT IN ER BLOOD GROUP SYSTEM</scope>
    <scope>VARIANTS 1763-TYR--GLU-2521 DEL; GLN-2245; LYS-2392; SER-2394; GLN-2407 AND LYS-2407</scope>
</reference>
<reference key="25">
    <citation type="journal article" date="2024" name="Nat. Commun.">
        <title>PIEZO1 loss-of-function compound heterozygous mutations in the rare congenital human disorder Prune Belly Syndrome.</title>
        <authorList>
            <person name="Amado N.G."/>
            <person name="Nosyreva E.D."/>
            <person name="Thompson D."/>
            <person name="Egeland T.J."/>
            <person name="Ogujiofor O.W."/>
            <person name="Yang M."/>
            <person name="Fusco A.N."/>
            <person name="Passoni N."/>
            <person name="Mathews J."/>
            <person name="Cantarel B."/>
            <person name="Baker L.A."/>
            <person name="Syeda R."/>
        </authorList>
    </citation>
    <scope>VARIANTS ARG-253 AND LEU-2195</scope>
    <scope>CHARACTERIZATION OF VARIANT LEU-2195</scope>
</reference>
<dbReference type="EMBL" id="AC138028">
    <property type="status" value="NOT_ANNOTATED_CDS"/>
    <property type="molecule type" value="Genomic_DNA"/>
</dbReference>
<dbReference type="EMBL" id="AB161230">
    <property type="protein sequence ID" value="BAF03565.1"/>
    <property type="molecule type" value="mRNA"/>
</dbReference>
<dbReference type="EMBL" id="D87071">
    <property type="protein sequence ID" value="BAA13240.1"/>
    <property type="molecule type" value="mRNA"/>
</dbReference>
<dbReference type="EMBL" id="BC150271">
    <property type="protein sequence ID" value="AAI50272.1"/>
    <property type="molecule type" value="mRNA"/>
</dbReference>
<dbReference type="CCDS" id="CCDS54058.1"/>
<dbReference type="RefSeq" id="NP_001136336.2">
    <property type="nucleotide sequence ID" value="NM_001142864.4"/>
</dbReference>
<dbReference type="PDB" id="8YEZ">
    <property type="method" value="EM"/>
    <property type="resolution" value="3.30 A"/>
    <property type="chains" value="A/B/C=1-2521"/>
</dbReference>
<dbReference type="PDB" id="8YFC">
    <property type="method" value="EM"/>
    <property type="resolution" value="3.20 A"/>
    <property type="chains" value="A/B/D=1-2521"/>
</dbReference>
<dbReference type="PDB" id="8YFG">
    <property type="method" value="EM"/>
    <property type="resolution" value="4.50 A"/>
    <property type="chains" value="A/B/D=1-2521"/>
</dbReference>
<dbReference type="PDB" id="8ZU3">
    <property type="method" value="EM"/>
    <property type="resolution" value="3.10 A"/>
    <property type="chains" value="A/B/D=1-2521"/>
</dbReference>
<dbReference type="PDB" id="8ZU8">
    <property type="method" value="EM"/>
    <property type="resolution" value="3.90 A"/>
    <property type="chains" value="A/B/C=570-2521"/>
</dbReference>
<dbReference type="PDBsum" id="8YEZ"/>
<dbReference type="PDBsum" id="8YFC"/>
<dbReference type="PDBsum" id="8YFG"/>
<dbReference type="PDBsum" id="8ZU3"/>
<dbReference type="PDBsum" id="8ZU8"/>
<dbReference type="EMDB" id="EMD-39205"/>
<dbReference type="EMDB" id="EMD-39219"/>
<dbReference type="EMDB" id="EMD-39223"/>
<dbReference type="EMDB" id="EMD-60479"/>
<dbReference type="EMDB" id="EMD-60481"/>
<dbReference type="SMR" id="Q92508"/>
<dbReference type="BioGRID" id="115124">
    <property type="interactions" value="61"/>
</dbReference>
<dbReference type="FunCoup" id="Q92508">
    <property type="interactions" value="1077"/>
</dbReference>
<dbReference type="IntAct" id="Q92508">
    <property type="interactions" value="42"/>
</dbReference>
<dbReference type="MINT" id="Q92508"/>
<dbReference type="STRING" id="9606.ENSP00000301015"/>
<dbReference type="BindingDB" id="Q92508"/>
<dbReference type="ChEMBL" id="CHEMBL5169186"/>
<dbReference type="GuidetoPHARMACOLOGY" id="2945"/>
<dbReference type="TCDB" id="1.A.75.1.1">
    <property type="family name" value="the mechanical nociceptor, piezo (piezo) family"/>
</dbReference>
<dbReference type="GlyCosmos" id="Q92508">
    <property type="glycosylation" value="2 sites, No reported glycans"/>
</dbReference>
<dbReference type="GlyGen" id="Q92508">
    <property type="glycosylation" value="5 sites, 10 N-linked glycans (2 sites)"/>
</dbReference>
<dbReference type="iPTMnet" id="Q92508"/>
<dbReference type="PhosphoSitePlus" id="Q92508"/>
<dbReference type="SwissPalm" id="Q92508"/>
<dbReference type="BioMuta" id="PIEZO1"/>
<dbReference type="DMDM" id="317373533"/>
<dbReference type="jPOST" id="Q92508"/>
<dbReference type="MassIVE" id="Q92508"/>
<dbReference type="PaxDb" id="9606-ENSP00000301015"/>
<dbReference type="PeptideAtlas" id="Q92508"/>
<dbReference type="ProteomicsDB" id="75277"/>
<dbReference type="Pumba" id="Q92508"/>
<dbReference type="Antibodypedia" id="44957">
    <property type="antibodies" value="187 antibodies from 24 providers"/>
</dbReference>
<dbReference type="DNASU" id="9780"/>
<dbReference type="Ensembl" id="ENST00000301015.14">
    <property type="protein sequence ID" value="ENSP00000301015.9"/>
    <property type="gene ID" value="ENSG00000103335.22"/>
</dbReference>
<dbReference type="GeneID" id="9780"/>
<dbReference type="KEGG" id="hsa:9780"/>
<dbReference type="MANE-Select" id="ENST00000301015.14">
    <property type="protein sequence ID" value="ENSP00000301015.9"/>
    <property type="RefSeq nucleotide sequence ID" value="NM_001142864.4"/>
    <property type="RefSeq protein sequence ID" value="NP_001136336.2"/>
</dbReference>
<dbReference type="UCSC" id="uc010vpb.3">
    <property type="organism name" value="human"/>
</dbReference>
<dbReference type="AGR" id="HGNC:28993"/>
<dbReference type="CTD" id="9780"/>
<dbReference type="DisGeNET" id="9780"/>
<dbReference type="GeneCards" id="PIEZO1"/>
<dbReference type="HGNC" id="HGNC:28993">
    <property type="gene designation" value="PIEZO1"/>
</dbReference>
<dbReference type="HPA" id="ENSG00000103335">
    <property type="expression patterns" value="Low tissue specificity"/>
</dbReference>
<dbReference type="MalaCards" id="PIEZO1"/>
<dbReference type="MIM" id="194380">
    <property type="type" value="phenotype"/>
</dbReference>
<dbReference type="MIM" id="611184">
    <property type="type" value="gene"/>
</dbReference>
<dbReference type="MIM" id="616843">
    <property type="type" value="phenotype"/>
</dbReference>
<dbReference type="MIM" id="620207">
    <property type="type" value="phenotype"/>
</dbReference>
<dbReference type="neXtProt" id="NX_Q92508"/>
<dbReference type="OpenTargets" id="ENSG00000103335"/>
<dbReference type="Orphanet" id="3202">
    <property type="disease" value="Dehydrated hereditary stomatocytosis"/>
</dbReference>
<dbReference type="Orphanet" id="568062">
    <property type="disease" value="PIEZO1-related generalized lymphatic dysplasia with non-immune hydrops fetalis"/>
</dbReference>
<dbReference type="VEuPathDB" id="HostDB:ENSG00000103335"/>
<dbReference type="eggNOG" id="KOG1893">
    <property type="taxonomic scope" value="Eukaryota"/>
</dbReference>
<dbReference type="GeneTree" id="ENSGT00940000157348"/>
<dbReference type="HOGENOM" id="CLU_000512_0_0_1"/>
<dbReference type="InParanoid" id="Q92508"/>
<dbReference type="OMA" id="KTTFQMA"/>
<dbReference type="OrthoDB" id="303066at2759"/>
<dbReference type="PAN-GO" id="Q92508">
    <property type="GO annotations" value="7 GO annotations based on evolutionary models"/>
</dbReference>
<dbReference type="PhylomeDB" id="Q92508"/>
<dbReference type="TreeFam" id="TF314295"/>
<dbReference type="PathwayCommons" id="Q92508"/>
<dbReference type="Reactome" id="R-HSA-9856530">
    <property type="pathway name" value="High laminar flow shear stress activates signaling by PIEZO1 and PECAM1:CDH5:KDR in endothelial cells"/>
</dbReference>
<dbReference type="Reactome" id="R-HSA-9856532">
    <property type="pathway name" value="Mechanical load activates signaling by PIEZO1 and integrins in osteocytes"/>
</dbReference>
<dbReference type="Reactome" id="R-HSA-9860927">
    <property type="pathway name" value="Turbulent (oscillatory, disturbed) flow shear stress activates signaling by PIEZO1 and integrins in endothelial cells"/>
</dbReference>
<dbReference type="SignaLink" id="Q92508"/>
<dbReference type="SIGNOR" id="Q92508"/>
<dbReference type="BioGRID-ORCS" id="9780">
    <property type="hits" value="24 hits in 1164 CRISPR screens"/>
</dbReference>
<dbReference type="ChiTaRS" id="PIEZO1">
    <property type="organism name" value="human"/>
</dbReference>
<dbReference type="GenomeRNAi" id="9780"/>
<dbReference type="Pharos" id="Q92508">
    <property type="development level" value="Tchem"/>
</dbReference>
<dbReference type="PRO" id="PR:Q92508"/>
<dbReference type="Proteomes" id="UP000005640">
    <property type="component" value="Chromosome 16"/>
</dbReference>
<dbReference type="RNAct" id="Q92508">
    <property type="molecule type" value="protein"/>
</dbReference>
<dbReference type="Bgee" id="ENSG00000103335">
    <property type="expression patterns" value="Expressed in muscle layer of sigmoid colon and 94 other cell types or tissues"/>
</dbReference>
<dbReference type="ExpressionAtlas" id="Q92508">
    <property type="expression patterns" value="baseline and differential"/>
</dbReference>
<dbReference type="GO" id="GO:0032437">
    <property type="term" value="C:cuticular plate"/>
    <property type="evidence" value="ECO:0000250"/>
    <property type="project" value="UniProtKB"/>
</dbReference>
<dbReference type="GO" id="GO:0005783">
    <property type="term" value="C:endoplasmic reticulum"/>
    <property type="evidence" value="ECO:0000314"/>
    <property type="project" value="UniProtKB"/>
</dbReference>
<dbReference type="GO" id="GO:0005789">
    <property type="term" value="C:endoplasmic reticulum membrane"/>
    <property type="evidence" value="ECO:0007669"/>
    <property type="project" value="UniProtKB-SubCell"/>
</dbReference>
<dbReference type="GO" id="GO:0033116">
    <property type="term" value="C:endoplasmic reticulum-Golgi intermediate compartment membrane"/>
    <property type="evidence" value="ECO:0007669"/>
    <property type="project" value="UniProtKB-SubCell"/>
</dbReference>
<dbReference type="GO" id="GO:0031258">
    <property type="term" value="C:lamellipodium membrane"/>
    <property type="evidence" value="ECO:0007669"/>
    <property type="project" value="UniProtKB-SubCell"/>
</dbReference>
<dbReference type="GO" id="GO:0005886">
    <property type="term" value="C:plasma membrane"/>
    <property type="evidence" value="ECO:0000250"/>
    <property type="project" value="UniProtKB"/>
</dbReference>
<dbReference type="GO" id="GO:0032420">
    <property type="term" value="C:stereocilium"/>
    <property type="evidence" value="ECO:0000250"/>
    <property type="project" value="UniProtKB"/>
</dbReference>
<dbReference type="GO" id="GO:0140135">
    <property type="term" value="F:mechanosensitive monoatomic cation channel activity"/>
    <property type="evidence" value="ECO:0000314"/>
    <property type="project" value="UniProtKB"/>
</dbReference>
<dbReference type="GO" id="GO:0008381">
    <property type="term" value="F:mechanosensitive monoatomic ion channel activity"/>
    <property type="evidence" value="ECO:0000318"/>
    <property type="project" value="GO_Central"/>
</dbReference>
<dbReference type="GO" id="GO:0005261">
    <property type="term" value="F:monoatomic cation channel activity"/>
    <property type="evidence" value="ECO:0000250"/>
    <property type="project" value="UniProtKB"/>
</dbReference>
<dbReference type="GO" id="GO:0071260">
    <property type="term" value="P:cellular response to mechanical stimulus"/>
    <property type="evidence" value="ECO:0000318"/>
    <property type="project" value="GO_Central"/>
</dbReference>
<dbReference type="GO" id="GO:0050982">
    <property type="term" value="P:detection of mechanical stimulus"/>
    <property type="evidence" value="ECO:0000318"/>
    <property type="project" value="GO_Central"/>
</dbReference>
<dbReference type="GO" id="GO:0006812">
    <property type="term" value="P:monoatomic cation transport"/>
    <property type="evidence" value="ECO:0000250"/>
    <property type="project" value="UniProtKB"/>
</dbReference>
<dbReference type="GO" id="GO:0033634">
    <property type="term" value="P:positive regulation of cell-cell adhesion mediated by integrin"/>
    <property type="evidence" value="ECO:0000315"/>
    <property type="project" value="UniProtKB"/>
</dbReference>
<dbReference type="GO" id="GO:0033625">
    <property type="term" value="P:positive regulation of integrin activation"/>
    <property type="evidence" value="ECO:0000315"/>
    <property type="project" value="UniProtKB"/>
</dbReference>
<dbReference type="GO" id="GO:0010831">
    <property type="term" value="P:positive regulation of myotube differentiation"/>
    <property type="evidence" value="ECO:0000315"/>
    <property type="project" value="UniProtKB"/>
</dbReference>
<dbReference type="GO" id="GO:0042391">
    <property type="term" value="P:regulation of membrane potential"/>
    <property type="evidence" value="ECO:0000318"/>
    <property type="project" value="GO_Central"/>
</dbReference>
<dbReference type="InterPro" id="IPR027272">
    <property type="entry name" value="Piezo"/>
</dbReference>
<dbReference type="InterPro" id="IPR031334">
    <property type="entry name" value="Piezo_cap_dom"/>
</dbReference>
<dbReference type="InterPro" id="IPR056770">
    <property type="entry name" value="Piezo_THU9_anchor"/>
</dbReference>
<dbReference type="InterPro" id="IPR056769">
    <property type="entry name" value="Piezo_TM1-24"/>
</dbReference>
<dbReference type="InterPro" id="IPR031805">
    <property type="entry name" value="Piezo_TM25-28"/>
</dbReference>
<dbReference type="InterPro" id="IPR056768">
    <property type="entry name" value="THU_Piezo"/>
</dbReference>
<dbReference type="PANTHER" id="PTHR47049:SF5">
    <property type="entry name" value="PIEZO-TYPE MECHANOSENSITIVE ION CHANNEL COMPONENT"/>
    <property type="match status" value="1"/>
</dbReference>
<dbReference type="PANTHER" id="PTHR47049">
    <property type="entry name" value="PIEZO-TYPE MECHANOSENSITIVE ION CHANNEL HOMOLOG"/>
    <property type="match status" value="1"/>
</dbReference>
<dbReference type="Pfam" id="PF12166">
    <property type="entry name" value="Piezo_cap"/>
    <property type="match status" value="1"/>
</dbReference>
<dbReference type="Pfam" id="PF24874">
    <property type="entry name" value="Piezo_THU9_anchor"/>
    <property type="match status" value="1"/>
</dbReference>
<dbReference type="Pfam" id="PF24871">
    <property type="entry name" value="Piezo_TM1-24"/>
    <property type="match status" value="1"/>
</dbReference>
<dbReference type="Pfam" id="PF15917">
    <property type="entry name" value="Piezo_TM25-28"/>
    <property type="match status" value="1"/>
</dbReference>
<dbReference type="Pfam" id="PF23188">
    <property type="entry name" value="THU_Piezo1"/>
    <property type="match status" value="1"/>
</dbReference>
<organism>
    <name type="scientific">Homo sapiens</name>
    <name type="common">Human</name>
    <dbReference type="NCBI Taxonomy" id="9606"/>
    <lineage>
        <taxon>Eukaryota</taxon>
        <taxon>Metazoa</taxon>
        <taxon>Chordata</taxon>
        <taxon>Craniata</taxon>
        <taxon>Vertebrata</taxon>
        <taxon>Euteleostomi</taxon>
        <taxon>Mammalia</taxon>
        <taxon>Eutheria</taxon>
        <taxon>Euarchontoglires</taxon>
        <taxon>Primates</taxon>
        <taxon>Haplorrhini</taxon>
        <taxon>Catarrhini</taxon>
        <taxon>Hominidae</taxon>
        <taxon>Homo</taxon>
    </lineage>
</organism>